<evidence type="ECO:0000255" key="1">
    <source>
        <dbReference type="HAMAP-Rule" id="MF_00120"/>
    </source>
</evidence>
<protein>
    <recommendedName>
        <fullName evidence="1">Glutamyl-tRNA(Gln) amidotransferase subunit A</fullName>
        <shortName evidence="1">Glu-ADT subunit A</shortName>
        <ecNumber evidence="1">6.3.5.7</ecNumber>
    </recommendedName>
</protein>
<sequence length="488" mass="53139">MELYSLTVHELKELLHKREVSAQEVTKSYLERIKEVEPKIDALVTITEEFALERAKVADEMIKNGEAKDLTGIPVIIKDNISTEGIRTTCSSKMLENYIPPYNATVVERLLNEGVVILGKSNLDEFAMGSSTENSAFKTTKNPWDLSRVPGGSSGGSAAAVAADEAAFALGSDTGGSIRQPASLCGVVGMKPTYGLVSRYGLVAFASSLDQIGPFTKDVTDCAIVLNAIAGHDPMDSTSVKIEKPDYTSYLKEDIKGLRIGVAKEFFGAGIEEGVKETVEKAIKVFEDLGAEIIDISVPYVEYALPAYYIIASAEASSNLARYDGIRYGHIAKNYEDLVDMYMTSRSEGFGKEVKRRIMLGTYALSSGYYDAYYKKALKVRTLIKNDFERAFEKCDVIVGPTSPTVAFKIGERTNDPLAMYLADIYTVSVNIAGLPAISIPCGLSEGLPVGLQIIGKHFDEGRILNVAYAFEKAYKFDAKPQAIGGER</sequence>
<reference key="1">
    <citation type="journal article" date="2002" name="Genome Res.">
        <title>A complete sequence of the T. tengcongensis genome.</title>
        <authorList>
            <person name="Bao Q."/>
            <person name="Tian Y."/>
            <person name="Li W."/>
            <person name="Xu Z."/>
            <person name="Xuan Z."/>
            <person name="Hu S."/>
            <person name="Dong W."/>
            <person name="Yang J."/>
            <person name="Chen Y."/>
            <person name="Xue Y."/>
            <person name="Xu Y."/>
            <person name="Lai X."/>
            <person name="Huang L."/>
            <person name="Dong X."/>
            <person name="Ma Y."/>
            <person name="Ling L."/>
            <person name="Tan H."/>
            <person name="Chen R."/>
            <person name="Wang J."/>
            <person name="Yu J."/>
            <person name="Yang H."/>
        </authorList>
    </citation>
    <scope>NUCLEOTIDE SEQUENCE [LARGE SCALE GENOMIC DNA]</scope>
    <source>
        <strain>DSM 15242 / JCM 11007 / NBRC 100824 / MB4</strain>
    </source>
</reference>
<organism>
    <name type="scientific">Caldanaerobacter subterraneus subsp. tengcongensis (strain DSM 15242 / JCM 11007 / NBRC 100824 / MB4)</name>
    <name type="common">Thermoanaerobacter tengcongensis</name>
    <dbReference type="NCBI Taxonomy" id="273068"/>
    <lineage>
        <taxon>Bacteria</taxon>
        <taxon>Bacillati</taxon>
        <taxon>Bacillota</taxon>
        <taxon>Clostridia</taxon>
        <taxon>Thermoanaerobacterales</taxon>
        <taxon>Thermoanaerobacteraceae</taxon>
        <taxon>Caldanaerobacter</taxon>
    </lineage>
</organism>
<dbReference type="EC" id="6.3.5.7" evidence="1"/>
<dbReference type="EMBL" id="AE008691">
    <property type="protein sequence ID" value="AAM23877.1"/>
    <property type="molecule type" value="Genomic_DNA"/>
</dbReference>
<dbReference type="RefSeq" id="WP_011025022.1">
    <property type="nucleotide sequence ID" value="NC_003869.1"/>
</dbReference>
<dbReference type="SMR" id="Q8RC40"/>
<dbReference type="STRING" id="273068.TTE0607"/>
<dbReference type="KEGG" id="tte:TTE0607"/>
<dbReference type="eggNOG" id="COG0154">
    <property type="taxonomic scope" value="Bacteria"/>
</dbReference>
<dbReference type="HOGENOM" id="CLU_009600_0_3_9"/>
<dbReference type="OrthoDB" id="9811471at2"/>
<dbReference type="Proteomes" id="UP000000555">
    <property type="component" value="Chromosome"/>
</dbReference>
<dbReference type="GO" id="GO:0030956">
    <property type="term" value="C:glutamyl-tRNA(Gln) amidotransferase complex"/>
    <property type="evidence" value="ECO:0007669"/>
    <property type="project" value="InterPro"/>
</dbReference>
<dbReference type="GO" id="GO:0005524">
    <property type="term" value="F:ATP binding"/>
    <property type="evidence" value="ECO:0007669"/>
    <property type="project" value="UniProtKB-KW"/>
</dbReference>
<dbReference type="GO" id="GO:0050567">
    <property type="term" value="F:glutaminyl-tRNA synthase (glutamine-hydrolyzing) activity"/>
    <property type="evidence" value="ECO:0007669"/>
    <property type="project" value="UniProtKB-UniRule"/>
</dbReference>
<dbReference type="GO" id="GO:0006412">
    <property type="term" value="P:translation"/>
    <property type="evidence" value="ECO:0007669"/>
    <property type="project" value="UniProtKB-UniRule"/>
</dbReference>
<dbReference type="Gene3D" id="3.90.1300.10">
    <property type="entry name" value="Amidase signature (AS) domain"/>
    <property type="match status" value="1"/>
</dbReference>
<dbReference type="HAMAP" id="MF_00120">
    <property type="entry name" value="GatA"/>
    <property type="match status" value="1"/>
</dbReference>
<dbReference type="InterPro" id="IPR000120">
    <property type="entry name" value="Amidase"/>
</dbReference>
<dbReference type="InterPro" id="IPR020556">
    <property type="entry name" value="Amidase_CS"/>
</dbReference>
<dbReference type="InterPro" id="IPR023631">
    <property type="entry name" value="Amidase_dom"/>
</dbReference>
<dbReference type="InterPro" id="IPR036928">
    <property type="entry name" value="AS_sf"/>
</dbReference>
<dbReference type="InterPro" id="IPR004412">
    <property type="entry name" value="GatA"/>
</dbReference>
<dbReference type="NCBIfam" id="TIGR00132">
    <property type="entry name" value="gatA"/>
    <property type="match status" value="1"/>
</dbReference>
<dbReference type="PANTHER" id="PTHR11895:SF151">
    <property type="entry name" value="GLUTAMYL-TRNA(GLN) AMIDOTRANSFERASE SUBUNIT A"/>
    <property type="match status" value="1"/>
</dbReference>
<dbReference type="PANTHER" id="PTHR11895">
    <property type="entry name" value="TRANSAMIDASE"/>
    <property type="match status" value="1"/>
</dbReference>
<dbReference type="Pfam" id="PF01425">
    <property type="entry name" value="Amidase"/>
    <property type="match status" value="1"/>
</dbReference>
<dbReference type="PIRSF" id="PIRSF001221">
    <property type="entry name" value="Amidase_fungi"/>
    <property type="match status" value="1"/>
</dbReference>
<dbReference type="SUPFAM" id="SSF75304">
    <property type="entry name" value="Amidase signature (AS) enzymes"/>
    <property type="match status" value="1"/>
</dbReference>
<dbReference type="PROSITE" id="PS00571">
    <property type="entry name" value="AMIDASES"/>
    <property type="match status" value="1"/>
</dbReference>
<gene>
    <name evidence="1" type="primary">gatA</name>
    <name type="ordered locus">TTE0607</name>
</gene>
<feature type="chain" id="PRO_0000105223" description="Glutamyl-tRNA(Gln) amidotransferase subunit A">
    <location>
        <begin position="1"/>
        <end position="488"/>
    </location>
</feature>
<feature type="active site" description="Charge relay system" evidence="1">
    <location>
        <position position="78"/>
    </location>
</feature>
<feature type="active site" description="Charge relay system" evidence="1">
    <location>
        <position position="153"/>
    </location>
</feature>
<feature type="active site" description="Acyl-ester intermediate" evidence="1">
    <location>
        <position position="177"/>
    </location>
</feature>
<proteinExistence type="inferred from homology"/>
<keyword id="KW-0067">ATP-binding</keyword>
<keyword id="KW-0436">Ligase</keyword>
<keyword id="KW-0547">Nucleotide-binding</keyword>
<keyword id="KW-0648">Protein biosynthesis</keyword>
<keyword id="KW-1185">Reference proteome</keyword>
<accession>Q8RC40</accession>
<name>GATA_CALS4</name>
<comment type="function">
    <text evidence="1">Allows the formation of correctly charged Gln-tRNA(Gln) through the transamidation of misacylated Glu-tRNA(Gln) in organisms which lack glutaminyl-tRNA synthetase. The reaction takes place in the presence of glutamine and ATP through an activated gamma-phospho-Glu-tRNA(Gln).</text>
</comment>
<comment type="catalytic activity">
    <reaction evidence="1">
        <text>L-glutamyl-tRNA(Gln) + L-glutamine + ATP + H2O = L-glutaminyl-tRNA(Gln) + L-glutamate + ADP + phosphate + H(+)</text>
        <dbReference type="Rhea" id="RHEA:17521"/>
        <dbReference type="Rhea" id="RHEA-COMP:9681"/>
        <dbReference type="Rhea" id="RHEA-COMP:9684"/>
        <dbReference type="ChEBI" id="CHEBI:15377"/>
        <dbReference type="ChEBI" id="CHEBI:15378"/>
        <dbReference type="ChEBI" id="CHEBI:29985"/>
        <dbReference type="ChEBI" id="CHEBI:30616"/>
        <dbReference type="ChEBI" id="CHEBI:43474"/>
        <dbReference type="ChEBI" id="CHEBI:58359"/>
        <dbReference type="ChEBI" id="CHEBI:78520"/>
        <dbReference type="ChEBI" id="CHEBI:78521"/>
        <dbReference type="ChEBI" id="CHEBI:456216"/>
        <dbReference type="EC" id="6.3.5.7"/>
    </reaction>
</comment>
<comment type="subunit">
    <text evidence="1">Heterotrimer of A, B and C subunits.</text>
</comment>
<comment type="similarity">
    <text evidence="1">Belongs to the amidase family. GatA subfamily.</text>
</comment>